<gene>
    <name type="primary">CHSA</name>
</gene>
<evidence type="ECO:0000255" key="1">
    <source>
        <dbReference type="PROSITE-ProRule" id="PRU10023"/>
    </source>
</evidence>
<evidence type="ECO:0000305" key="2"/>
<protein>
    <recommendedName>
        <fullName>Chalcone synthase A</fullName>
        <ecNumber>2.3.1.74</ecNumber>
    </recommendedName>
    <alternativeName>
        <fullName>Naringenin-chalcone synthase A</fullName>
        <shortName>CHS-A</shortName>
    </alternativeName>
</protein>
<organism>
    <name type="scientific">Ipomoea triloba</name>
    <name type="common">Trilobed morning glory</name>
    <dbReference type="NCBI Taxonomy" id="35885"/>
    <lineage>
        <taxon>Eukaryota</taxon>
        <taxon>Viridiplantae</taxon>
        <taxon>Streptophyta</taxon>
        <taxon>Embryophyta</taxon>
        <taxon>Tracheophyta</taxon>
        <taxon>Spermatophyta</taxon>
        <taxon>Magnoliopsida</taxon>
        <taxon>eudicotyledons</taxon>
        <taxon>Gunneridae</taxon>
        <taxon>Pentapetalae</taxon>
        <taxon>asterids</taxon>
        <taxon>lamiids</taxon>
        <taxon>Solanales</taxon>
        <taxon>Convolvulaceae</taxon>
        <taxon>Ipomoeeae</taxon>
        <taxon>Ipomoea</taxon>
    </lineage>
</organism>
<reference key="1">
    <citation type="journal article" date="1995" name="Proc. Natl. Acad. Sci. U.S.A.">
        <title>Evolution of the chalcone synthase gene family in the genus Ipomoea.</title>
        <authorList>
            <person name="Durbin M.L."/>
            <person name="Learn G.H."/>
            <person name="Huttley G.A."/>
            <person name="Clegg M.T."/>
        </authorList>
    </citation>
    <scope>NUCLEOTIDE SEQUENCE [GENOMIC DNA]</scope>
</reference>
<dbReference type="EC" id="2.3.1.74"/>
<dbReference type="EMBL" id="U15952">
    <property type="protein sequence ID" value="AAC49034.1"/>
    <property type="molecule type" value="Genomic_DNA"/>
</dbReference>
<dbReference type="SMR" id="P48403"/>
<dbReference type="UniPathway" id="UPA00154"/>
<dbReference type="GO" id="GO:0016210">
    <property type="term" value="F:naringenin-chalcone synthase activity"/>
    <property type="evidence" value="ECO:0007669"/>
    <property type="project" value="UniProtKB-EC"/>
</dbReference>
<dbReference type="GO" id="GO:0009813">
    <property type="term" value="P:flavonoid biosynthetic process"/>
    <property type="evidence" value="ECO:0007669"/>
    <property type="project" value="UniProtKB-UniPathway"/>
</dbReference>
<dbReference type="GO" id="GO:0030639">
    <property type="term" value="P:polyketide biosynthetic process"/>
    <property type="evidence" value="ECO:0007669"/>
    <property type="project" value="TreeGrafter"/>
</dbReference>
<dbReference type="CDD" id="cd00831">
    <property type="entry name" value="CHS_like"/>
    <property type="match status" value="1"/>
</dbReference>
<dbReference type="FunFam" id="3.40.47.10:FF:000014">
    <property type="entry name" value="Chalcone synthase 1"/>
    <property type="match status" value="1"/>
</dbReference>
<dbReference type="FunFam" id="3.40.47.10:FF:000025">
    <property type="entry name" value="Chalcone synthase 2"/>
    <property type="match status" value="1"/>
</dbReference>
<dbReference type="Gene3D" id="3.40.47.10">
    <property type="match status" value="2"/>
</dbReference>
<dbReference type="InterPro" id="IPR012328">
    <property type="entry name" value="Chalcone/stilbene_synt_C"/>
</dbReference>
<dbReference type="InterPro" id="IPR001099">
    <property type="entry name" value="Chalcone/stilbene_synt_N"/>
</dbReference>
<dbReference type="InterPro" id="IPR018088">
    <property type="entry name" value="Chalcone/stilbene_synthase_AS"/>
</dbReference>
<dbReference type="InterPro" id="IPR011141">
    <property type="entry name" value="Polyketide_synthase_type-III"/>
</dbReference>
<dbReference type="InterPro" id="IPR016039">
    <property type="entry name" value="Thiolase-like"/>
</dbReference>
<dbReference type="PANTHER" id="PTHR11877:SF104">
    <property type="entry name" value="CHALCONE SYNTHASE"/>
    <property type="match status" value="1"/>
</dbReference>
<dbReference type="PANTHER" id="PTHR11877">
    <property type="entry name" value="HYDROXYMETHYLGLUTARYL-COA SYNTHASE"/>
    <property type="match status" value="1"/>
</dbReference>
<dbReference type="Pfam" id="PF02797">
    <property type="entry name" value="Chal_sti_synt_C"/>
    <property type="match status" value="1"/>
</dbReference>
<dbReference type="Pfam" id="PF00195">
    <property type="entry name" value="Chal_sti_synt_N"/>
    <property type="match status" value="1"/>
</dbReference>
<dbReference type="PIRSF" id="PIRSF000451">
    <property type="entry name" value="PKS_III"/>
    <property type="match status" value="1"/>
</dbReference>
<dbReference type="SUPFAM" id="SSF53901">
    <property type="entry name" value="Thiolase-like"/>
    <property type="match status" value="2"/>
</dbReference>
<dbReference type="PROSITE" id="PS00441">
    <property type="entry name" value="CHALCONE_SYNTH"/>
    <property type="match status" value="1"/>
</dbReference>
<sequence>MSPTVTVQLTDDTAKRFEGHAKLLAIGTATPTNWVDQATYPDFYFRITNSERLLEHKEKFRRICNKSKIRFRHLVLTEELLKKSPNLCTYNDASLNTRQDILVSEVPKLGKEAAMKAIKEWGRPISEITHLVFCTTSGVDMPGADFQLTKLLGLNSSVKRLMMYQQGCNAGAAMLRLVKDLAENNKGARVLVVCSEITINIFRGPSLEQDDNLLAQCLFGDGSAAMIVGKDPRPGLETPLFELVSSAQTIVPNTDSHLKLTLREMGLTFHCSRAVPSVLAENVEDCLVKAFEPYGISDWNSIFWVFHPGGYAIVDRVEERLGLGPERLRASRDVLSEYGNLTSACVLFILDEMRKKSKKDEQ</sequence>
<comment type="function">
    <text>The primary product of this enzyme is 4,2',4',6'-tetrahydroxychalcone (also termed naringenin-chalcone or chalcone) which can under specific conditions spontaneously isomerize into naringenin.</text>
</comment>
<comment type="catalytic activity">
    <reaction evidence="1">
        <text>(E)-4-coumaroyl-CoA + 3 malonyl-CoA + 3 H(+) = 2',4,4',6'-tetrahydroxychalcone + 3 CO2 + 4 CoA</text>
        <dbReference type="Rhea" id="RHEA:11128"/>
        <dbReference type="ChEBI" id="CHEBI:15378"/>
        <dbReference type="ChEBI" id="CHEBI:15413"/>
        <dbReference type="ChEBI" id="CHEBI:16526"/>
        <dbReference type="ChEBI" id="CHEBI:57287"/>
        <dbReference type="ChEBI" id="CHEBI:57384"/>
        <dbReference type="ChEBI" id="CHEBI:85008"/>
        <dbReference type="EC" id="2.3.1.74"/>
    </reaction>
</comment>
<comment type="pathway">
    <text>Secondary metabolite biosynthesis; flavonoid biosynthesis.</text>
</comment>
<comment type="similarity">
    <text evidence="2">Belongs to the thiolase-like superfamily. Chalcone/stilbene synthases family.</text>
</comment>
<accession>P48403</accession>
<feature type="chain" id="PRO_0000215999" description="Chalcone synthase A">
    <location>
        <begin position="1"/>
        <end position="362" status="greater than"/>
    </location>
</feature>
<feature type="active site" evidence="1">
    <location>
        <position position="168"/>
    </location>
</feature>
<feature type="non-terminal residue">
    <location>
        <position position="362"/>
    </location>
</feature>
<name>CHSA_IPOTR</name>
<proteinExistence type="inferred from homology"/>
<keyword id="KW-0012">Acyltransferase</keyword>
<keyword id="KW-0284">Flavonoid biosynthesis</keyword>
<keyword id="KW-0808">Transferase</keyword>